<accession>P0CAK1</accession>
<evidence type="ECO:0000250" key="1">
    <source>
        <dbReference type="UniProtKB" id="P27946"/>
    </source>
</evidence>
<evidence type="ECO:0000305" key="2"/>
<keyword id="KW-0244">Early protein</keyword>
<keyword id="KW-0946">Virion</keyword>
<sequence length="72" mass="8418">METQKLISMVKEALEKYQYPLTAKNIKVVIQKEHNVILPTGSINSILYSNPELFEKIDKTNTIYPPLWIRKN</sequence>
<proteinExistence type="inferred from homology"/>
<organismHost>
    <name type="scientific">Ornithodoros</name>
    <name type="common">relapsing fever ticks</name>
    <dbReference type="NCBI Taxonomy" id="6937"/>
</organismHost>
<organismHost>
    <name type="scientific">Phacochoerus aethiopicus</name>
    <name type="common">Warthog</name>
    <dbReference type="NCBI Taxonomy" id="85517"/>
</organismHost>
<organismHost>
    <name type="scientific">Phacochoerus africanus</name>
    <name type="common">Warthog</name>
    <dbReference type="NCBI Taxonomy" id="41426"/>
</organismHost>
<organismHost>
    <name type="scientific">Potamochoerus larvatus</name>
    <name type="common">Bushpig</name>
    <dbReference type="NCBI Taxonomy" id="273792"/>
</organismHost>
<organismHost>
    <name type="scientific">Sus scrofa</name>
    <name type="common">Pig</name>
    <dbReference type="NCBI Taxonomy" id="9823"/>
</organismHost>
<reference key="1">
    <citation type="submission" date="2003-03" db="EMBL/GenBank/DDBJ databases">
        <title>African swine fever virus genomes.</title>
        <authorList>
            <person name="Kutish G.F."/>
            <person name="Rock D.L."/>
        </authorList>
    </citation>
    <scope>NUCLEOTIDE SEQUENCE [LARGE SCALE GENOMIC DNA]</scope>
</reference>
<name>VF73R_ASFP4</name>
<comment type="subcellular location">
    <subcellularLocation>
        <location evidence="1">Virion</location>
    </subcellularLocation>
</comment>
<comment type="induction">
    <text evidence="2">Expressed in the early phase of the viral replicative cycle.</text>
</comment>
<comment type="similarity">
    <text evidence="2">Belongs to the asfivirus I73R family.</text>
</comment>
<dbReference type="EMBL" id="AY261363">
    <property type="status" value="NOT_ANNOTATED_CDS"/>
    <property type="molecule type" value="Genomic_DNA"/>
</dbReference>
<dbReference type="SMR" id="P0CAK1"/>
<dbReference type="Proteomes" id="UP000000859">
    <property type="component" value="Segment"/>
</dbReference>
<dbReference type="GO" id="GO:0044423">
    <property type="term" value="C:virion component"/>
    <property type="evidence" value="ECO:0007669"/>
    <property type="project" value="UniProtKB-KW"/>
</dbReference>
<gene>
    <name type="ordered locus">Pret-153</name>
</gene>
<organism>
    <name type="scientific">African swine fever virus (isolate Tick/South Africa/Pretoriuskop Pr4/1996)</name>
    <name type="common">ASFV</name>
    <dbReference type="NCBI Taxonomy" id="561443"/>
    <lineage>
        <taxon>Viruses</taxon>
        <taxon>Varidnaviria</taxon>
        <taxon>Bamfordvirae</taxon>
        <taxon>Nucleocytoviricota</taxon>
        <taxon>Pokkesviricetes</taxon>
        <taxon>Asfuvirales</taxon>
        <taxon>Asfarviridae</taxon>
        <taxon>Asfivirus</taxon>
        <taxon>African swine fever virus</taxon>
    </lineage>
</organism>
<feature type="chain" id="PRO_0000373727" description="Uncharacterized protein I73R">
    <location>
        <begin position="1"/>
        <end position="72"/>
    </location>
</feature>
<protein>
    <recommendedName>
        <fullName>Uncharacterized protein I73R</fullName>
    </recommendedName>
</protein>